<name>TDIF1_PONAB</name>
<evidence type="ECO:0000250" key="1">
    <source>
        <dbReference type="UniProtKB" id="Q99LB0"/>
    </source>
</evidence>
<evidence type="ECO:0000250" key="2">
    <source>
        <dbReference type="UniProtKB" id="Q9H147"/>
    </source>
</evidence>
<evidence type="ECO:0000255" key="3"/>
<evidence type="ECO:0000256" key="4">
    <source>
        <dbReference type="SAM" id="MobiDB-lite"/>
    </source>
</evidence>
<evidence type="ECO:0000305" key="5"/>
<protein>
    <recommendedName>
        <fullName>Deoxynucleotidyltransferase terminal-interacting protein 1</fullName>
    </recommendedName>
    <alternativeName>
        <fullName>Terminal deoxynucleotidyltransferase-interacting factor 1</fullName>
        <shortName>TdIF1</shortName>
        <shortName>TdT-interacting factor 1</shortName>
    </alternativeName>
</protein>
<feature type="chain" id="PRO_0000326137" description="Deoxynucleotidyltransferase terminal-interacting protein 1">
    <location>
        <begin position="1"/>
        <end position="329"/>
    </location>
</feature>
<feature type="DNA-binding region" description="A.T hook" evidence="5">
    <location>
        <begin position="159"/>
        <end position="173"/>
    </location>
</feature>
<feature type="DNA-binding region" description="H-T-H motif" evidence="5">
    <location>
        <begin position="216"/>
        <end position="237"/>
    </location>
</feature>
<feature type="region of interest" description="Disordered" evidence="4">
    <location>
        <begin position="1"/>
        <end position="22"/>
    </location>
</feature>
<feature type="region of interest" description="Important for dimerization" evidence="2">
    <location>
        <begin position="56"/>
        <end position="147"/>
    </location>
</feature>
<feature type="region of interest" description="Disordered" evidence="4">
    <location>
        <begin position="147"/>
        <end position="178"/>
    </location>
</feature>
<feature type="region of interest" description="Important for DNA and nucleosome binding" evidence="2">
    <location>
        <begin position="197"/>
        <end position="316"/>
    </location>
</feature>
<feature type="short sequence motif" description="Nuclear localization signal" evidence="3">
    <location>
        <begin position="164"/>
        <end position="170"/>
    </location>
</feature>
<feature type="compositionally biased region" description="Basic and acidic residues" evidence="4">
    <location>
        <begin position="147"/>
        <end position="158"/>
    </location>
</feature>
<feature type="modified residue" description="Phosphoserine" evidence="2">
    <location>
        <position position="161"/>
    </location>
</feature>
<reference key="1">
    <citation type="submission" date="2004-11" db="EMBL/GenBank/DDBJ databases">
        <authorList>
            <consortium name="The German cDNA consortium"/>
        </authorList>
    </citation>
    <scope>NUCLEOTIDE SEQUENCE [LARGE SCALE MRNA]</scope>
    <source>
        <tissue>Kidney</tissue>
    </source>
</reference>
<keyword id="KW-0238">DNA-binding</keyword>
<keyword id="KW-0539">Nucleus</keyword>
<keyword id="KW-0597">Phosphoprotein</keyword>
<keyword id="KW-1185">Reference proteome</keyword>
<keyword id="KW-0804">Transcription</keyword>
<keyword id="KW-0805">Transcription regulation</keyword>
<comment type="function">
    <text evidence="2">Increases DNTT terminal deoxynucleotidyltransferase activity (in vitro). Also acts as a transcriptional regulator, binding to the consensus sequence 5'-GNTGCATG-3' following an AT-tract. Associates with RAB20 promoter and positively regulates its transcription. Binds DNA and nucleosomes; may recruit HDAC1 complexes to nucleosomes or naked DNA.</text>
</comment>
<comment type="subunit">
    <text evidence="1 2">Monomer and homodimer. A minor proportion may form homotrimers. Interacts with ZNF541. Interacts with the terminal deoxynucleotidyltransferase DNTT. Interacts with TRERF1. Identified in a histone deacetylase complex that contains DNTTIP1, HDAC1 and MIDEAS; this complex assembles into a tetramer that contains four copies of each protein chain. Component of a histone deacetylase complex containing DNTTIP1, ZNF541, HDAC1 and HDAC2. Identified in a complex with KCTD19, HDAC1, HDAC2 and ZNF541.</text>
</comment>
<comment type="subcellular location">
    <subcellularLocation>
        <location evidence="2">Nucleus</location>
    </subcellularLocation>
</comment>
<comment type="domain">
    <text evidence="2">The N-terminal domain mediates dimerization.</text>
</comment>
<comment type="domain">
    <text evidence="2">The C-terminal domain mediates interaction with DNA and nucleosomes. It contains a HTH motif that mediates recognition of the consensus sequence.</text>
</comment>
<organism>
    <name type="scientific">Pongo abelii</name>
    <name type="common">Sumatran orangutan</name>
    <name type="synonym">Pongo pygmaeus abelii</name>
    <dbReference type="NCBI Taxonomy" id="9601"/>
    <lineage>
        <taxon>Eukaryota</taxon>
        <taxon>Metazoa</taxon>
        <taxon>Chordata</taxon>
        <taxon>Craniata</taxon>
        <taxon>Vertebrata</taxon>
        <taxon>Euteleostomi</taxon>
        <taxon>Mammalia</taxon>
        <taxon>Eutheria</taxon>
        <taxon>Euarchontoglires</taxon>
        <taxon>Primates</taxon>
        <taxon>Haplorrhini</taxon>
        <taxon>Catarrhini</taxon>
        <taxon>Hominidae</taxon>
        <taxon>Pongo</taxon>
    </lineage>
</organism>
<proteinExistence type="evidence at transcript level"/>
<sequence length="329" mass="36982">MGATGDAEQPRGPSGAERGGLELGDAGAAGQLVLTNPWNIMIKHRQVQRRGRRSQMTTSFTDPAISMDLLRAVLQPSINEEIQTVFNKYMKFFQKAALNVRDNVGEEVDAEQLIQEACRSCLEQAKLLFSDGEKVIPRLTHELPGIKRGRQAEEECAHRGSPLPKKRKGRPPGHILSSDRAAAGMVWKPKSCEPIRREGPKWDPARLNESTTFVLGSRANKALGMGGTRGRIYIKHPHLFKYAADPQDKHWLAEPHHMRATGGKMAYLLIEEDIRDLAASDDYRGCLDLKLEELKSFVLPSWMVEKMRKYMETLRTENEHRAVEAPPQT</sequence>
<gene>
    <name type="primary">DNTTIP1</name>
    <name type="synonym">TDIF1</name>
</gene>
<accession>Q5R595</accession>
<dbReference type="EMBL" id="CR860969">
    <property type="protein sequence ID" value="CAH93071.1"/>
    <property type="molecule type" value="mRNA"/>
</dbReference>
<dbReference type="RefSeq" id="NP_001126819.1">
    <property type="nucleotide sequence ID" value="NM_001133347.2"/>
</dbReference>
<dbReference type="BMRB" id="Q5R595"/>
<dbReference type="SMR" id="Q5R595"/>
<dbReference type="FunCoup" id="Q5R595">
    <property type="interactions" value="2947"/>
</dbReference>
<dbReference type="STRING" id="9601.ENSPPYP00000012369"/>
<dbReference type="GeneID" id="100173824"/>
<dbReference type="KEGG" id="pon:100173824"/>
<dbReference type="CTD" id="116092"/>
<dbReference type="eggNOG" id="KOG4801">
    <property type="taxonomic scope" value="Eukaryota"/>
</dbReference>
<dbReference type="HOGENOM" id="CLU_073342_0_0_1"/>
<dbReference type="InParanoid" id="Q5R595"/>
<dbReference type="OrthoDB" id="5860246at2759"/>
<dbReference type="Proteomes" id="UP000001595">
    <property type="component" value="Unplaced"/>
</dbReference>
<dbReference type="GO" id="GO:0000118">
    <property type="term" value="C:histone deacetylase complex"/>
    <property type="evidence" value="ECO:0000250"/>
    <property type="project" value="UniProtKB"/>
</dbReference>
<dbReference type="GO" id="GO:0005634">
    <property type="term" value="C:nucleus"/>
    <property type="evidence" value="ECO:0000250"/>
    <property type="project" value="UniProtKB"/>
</dbReference>
<dbReference type="GO" id="GO:0003677">
    <property type="term" value="F:DNA binding"/>
    <property type="evidence" value="ECO:0000250"/>
    <property type="project" value="UniProtKB"/>
</dbReference>
<dbReference type="GO" id="GO:0031491">
    <property type="term" value="F:nucleosome binding"/>
    <property type="evidence" value="ECO:0000250"/>
    <property type="project" value="UniProtKB"/>
</dbReference>
<dbReference type="InterPro" id="IPR041384">
    <property type="entry name" value="DNTTIP1_dimer"/>
</dbReference>
<dbReference type="InterPro" id="IPR026064">
    <property type="entry name" value="TdIF1"/>
</dbReference>
<dbReference type="InterPro" id="IPR049121">
    <property type="entry name" value="TdIF1_C"/>
</dbReference>
<dbReference type="PANTHER" id="PTHR23399">
    <property type="entry name" value="DEOXYNUCLEOTIDYLTRANSFERASE TERMINAL-INTERACTING PROTEIN 1"/>
    <property type="match status" value="1"/>
</dbReference>
<dbReference type="PANTHER" id="PTHR23399:SF2">
    <property type="entry name" value="DEOXYNUCLEOTIDYLTRANSFERASE TERMINAL-INTERACTING PROTEIN 1"/>
    <property type="match status" value="1"/>
</dbReference>
<dbReference type="Pfam" id="PF18192">
    <property type="entry name" value="DNTTIP1_dimer"/>
    <property type="match status" value="1"/>
</dbReference>
<dbReference type="Pfam" id="PF21229">
    <property type="entry name" value="TdIF1_2nd"/>
    <property type="match status" value="1"/>
</dbReference>